<keyword id="KW-1185">Reference proteome</keyword>
<accession>P34398</accession>
<feature type="chain" id="PRO_0000065288" description="Uncharacterized protein F10E9.4">
    <location>
        <begin position="1"/>
        <end position="262"/>
    </location>
</feature>
<feature type="region of interest" description="Disordered" evidence="1">
    <location>
        <begin position="1"/>
        <end position="30"/>
    </location>
</feature>
<feature type="region of interest" description="Disordered" evidence="1">
    <location>
        <begin position="232"/>
        <end position="262"/>
    </location>
</feature>
<feature type="compositionally biased region" description="Acidic residues" evidence="1">
    <location>
        <begin position="9"/>
        <end position="21"/>
    </location>
</feature>
<feature type="compositionally biased region" description="Acidic residues" evidence="1">
    <location>
        <begin position="232"/>
        <end position="245"/>
    </location>
</feature>
<feature type="compositionally biased region" description="Acidic residues" evidence="1">
    <location>
        <begin position="253"/>
        <end position="262"/>
    </location>
</feature>
<name>YLU4_CAEEL</name>
<reference key="1">
    <citation type="journal article" date="1994" name="Nature">
        <title>2.2 Mb of contiguous nucleotide sequence from chromosome III of C. elegans.</title>
        <authorList>
            <person name="Wilson R."/>
            <person name="Ainscough R."/>
            <person name="Anderson K."/>
            <person name="Baynes C."/>
            <person name="Berks M."/>
            <person name="Bonfield J."/>
            <person name="Burton J."/>
            <person name="Connell M."/>
            <person name="Copsey T."/>
            <person name="Cooper J."/>
            <person name="Coulson A."/>
            <person name="Craxton M."/>
            <person name="Dear S."/>
            <person name="Du Z."/>
            <person name="Durbin R."/>
            <person name="Favello A."/>
            <person name="Fraser A."/>
            <person name="Fulton L."/>
            <person name="Gardner A."/>
            <person name="Green P."/>
            <person name="Hawkins T."/>
            <person name="Hillier L."/>
            <person name="Jier M."/>
            <person name="Johnston L."/>
            <person name="Jones M."/>
            <person name="Kershaw J."/>
            <person name="Kirsten J."/>
            <person name="Laisster N."/>
            <person name="Latreille P."/>
            <person name="Lightning J."/>
            <person name="Lloyd C."/>
            <person name="Mortimore B."/>
            <person name="O'Callaghan M."/>
            <person name="Parsons J."/>
            <person name="Percy C."/>
            <person name="Rifken L."/>
            <person name="Roopra A."/>
            <person name="Saunders D."/>
            <person name="Shownkeen R."/>
            <person name="Sims M."/>
            <person name="Smaldon N."/>
            <person name="Smith A."/>
            <person name="Smith M."/>
            <person name="Sonnhammer E."/>
            <person name="Staden R."/>
            <person name="Sulston J."/>
            <person name="Thierry-Mieg J."/>
            <person name="Thomas K."/>
            <person name="Vaudin M."/>
            <person name="Vaughan K."/>
            <person name="Waterston R."/>
            <person name="Watson A."/>
            <person name="Weinstock L."/>
            <person name="Wilkinson-Sproat J."/>
            <person name="Wohldman P."/>
        </authorList>
    </citation>
    <scope>NUCLEOTIDE SEQUENCE [LARGE SCALE GENOMIC DNA]</scope>
    <source>
        <strain>Bristol N2</strain>
    </source>
</reference>
<reference key="2">
    <citation type="journal article" date="1998" name="Science">
        <title>Genome sequence of the nematode C. elegans: a platform for investigating biology.</title>
        <authorList>
            <consortium name="The C. elegans sequencing consortium"/>
        </authorList>
    </citation>
    <scope>NUCLEOTIDE SEQUENCE [LARGE SCALE GENOMIC DNA]</scope>
    <source>
        <strain>Bristol N2</strain>
    </source>
</reference>
<dbReference type="EMBL" id="FO081105">
    <property type="protein sequence ID" value="CCD69131.1"/>
    <property type="molecule type" value="Genomic_DNA"/>
</dbReference>
<dbReference type="PIR" id="S44803">
    <property type="entry name" value="S44803"/>
</dbReference>
<dbReference type="RefSeq" id="NP_498825.1">
    <property type="nucleotide sequence ID" value="NM_066424.4"/>
</dbReference>
<dbReference type="SMR" id="P34398"/>
<dbReference type="FunCoup" id="P34398">
    <property type="interactions" value="231"/>
</dbReference>
<dbReference type="STRING" id="6239.F10E9.4.2"/>
<dbReference type="PaxDb" id="6239-F10E9.4"/>
<dbReference type="PeptideAtlas" id="P34398"/>
<dbReference type="EnsemblMetazoa" id="F10E9.4.1">
    <property type="protein sequence ID" value="F10E9.4.1"/>
    <property type="gene ID" value="WBGene00017356"/>
</dbReference>
<dbReference type="GeneID" id="184304"/>
<dbReference type="KEGG" id="cel:CELE_F10E9.4"/>
<dbReference type="UCSC" id="F10E9.4">
    <property type="organism name" value="c. elegans"/>
</dbReference>
<dbReference type="AGR" id="WB:WBGene00017356"/>
<dbReference type="CTD" id="184304"/>
<dbReference type="WormBase" id="F10E9.4">
    <property type="protein sequence ID" value="CE00148"/>
    <property type="gene ID" value="WBGene00017356"/>
</dbReference>
<dbReference type="eggNOG" id="ENOG502SZ56">
    <property type="taxonomic scope" value="Eukaryota"/>
</dbReference>
<dbReference type="HOGENOM" id="CLU_1230885_0_0_1"/>
<dbReference type="InParanoid" id="P34398"/>
<dbReference type="OMA" id="DQYAFHT"/>
<dbReference type="OrthoDB" id="10250504at2759"/>
<dbReference type="Reactome" id="R-CEL-5250924">
    <property type="pathway name" value="B-WICH complex positively regulates rRNA expression"/>
</dbReference>
<dbReference type="Reactome" id="R-CEL-73762">
    <property type="pathway name" value="RNA Polymerase I Transcription Initiation"/>
</dbReference>
<dbReference type="Reactome" id="R-CEL-73772">
    <property type="pathway name" value="RNA Polymerase I Promoter Escape"/>
</dbReference>
<dbReference type="PRO" id="PR:P34398"/>
<dbReference type="Proteomes" id="UP000001940">
    <property type="component" value="Chromosome III"/>
</dbReference>
<dbReference type="Bgee" id="WBGene00017356">
    <property type="expression patterns" value="Expressed in germ line (C elegans) and 4 other cell types or tissues"/>
</dbReference>
<dbReference type="GO" id="GO:0000932">
    <property type="term" value="C:P-body"/>
    <property type="evidence" value="ECO:0000318"/>
    <property type="project" value="GO_Central"/>
</dbReference>
<dbReference type="GO" id="GO:0005665">
    <property type="term" value="C:RNA polymerase II, core complex"/>
    <property type="evidence" value="ECO:0000318"/>
    <property type="project" value="GO_Central"/>
</dbReference>
<dbReference type="GO" id="GO:0003697">
    <property type="term" value="F:single-stranded DNA binding"/>
    <property type="evidence" value="ECO:0000318"/>
    <property type="project" value="GO_Central"/>
</dbReference>
<dbReference type="GO" id="GO:0003727">
    <property type="term" value="F:single-stranded RNA binding"/>
    <property type="evidence" value="ECO:0000318"/>
    <property type="project" value="GO_Central"/>
</dbReference>
<dbReference type="GO" id="GO:0031369">
    <property type="term" value="F:translation initiation factor binding"/>
    <property type="evidence" value="ECO:0000318"/>
    <property type="project" value="GO_Central"/>
</dbReference>
<dbReference type="GO" id="GO:0000956">
    <property type="term" value="P:nuclear-transcribed mRNA catabolic process"/>
    <property type="evidence" value="ECO:0000318"/>
    <property type="project" value="GO_Central"/>
</dbReference>
<dbReference type="GO" id="GO:0060213">
    <property type="term" value="P:positive regulation of nuclear-transcribed mRNA poly(A) tail shortening"/>
    <property type="evidence" value="ECO:0000318"/>
    <property type="project" value="GO_Central"/>
</dbReference>
<dbReference type="GO" id="GO:0045948">
    <property type="term" value="P:positive regulation of translational initiation"/>
    <property type="evidence" value="ECO:0000318"/>
    <property type="project" value="GO_Central"/>
</dbReference>
<dbReference type="GO" id="GO:0006367">
    <property type="term" value="P:transcription initiation at RNA polymerase II promoter"/>
    <property type="evidence" value="ECO:0000318"/>
    <property type="project" value="GO_Central"/>
</dbReference>
<gene>
    <name type="ORF">F10E9.4</name>
</gene>
<organism>
    <name type="scientific">Caenorhabditis elegans</name>
    <dbReference type="NCBI Taxonomy" id="6239"/>
    <lineage>
        <taxon>Eukaryota</taxon>
        <taxon>Metazoa</taxon>
        <taxon>Ecdysozoa</taxon>
        <taxon>Nematoda</taxon>
        <taxon>Chromadorea</taxon>
        <taxon>Rhabditida</taxon>
        <taxon>Rhabditina</taxon>
        <taxon>Rhabditomorpha</taxon>
        <taxon>Rhabditoidea</taxon>
        <taxon>Rhabditidae</taxon>
        <taxon>Peloderinae</taxon>
        <taxon>Caenorhabditis</taxon>
    </lineage>
</organism>
<evidence type="ECO:0000256" key="1">
    <source>
        <dbReference type="SAM" id="MobiDB-lite"/>
    </source>
</evidence>
<proteinExistence type="predicted"/>
<sequence>MGKKKFIENEDGTTEVQETESEAPKDKKEKKEYRLRTLGANIKTSKKSFKEQFFMNYEDGLKLIKKMRGKGKGGQLVQKVMPRHISLPYHMSGKAAMEEACDWIAQNTVGKYRKEYKGIVVAVGSVDLASAPRVISDQYAFHTDVAINQIVFIPKIGDQYEAKVKYVQEGLMVGVVMDMITIHIKQNDKTSEDQVAIDDKILVKYSGIRIKSSLCHLKGEYVKMIEKAEIKEEEEVEDEADEETDVKEKVKEEEDEDEDMEE</sequence>
<protein>
    <recommendedName>
        <fullName>Uncharacterized protein F10E9.4</fullName>
    </recommendedName>
</protein>